<evidence type="ECO:0000250" key="1"/>
<evidence type="ECO:0000255" key="2">
    <source>
        <dbReference type="HAMAP-Rule" id="MF_01398"/>
    </source>
</evidence>
<geneLocation type="cyanelle"/>
<keyword id="KW-0066">ATP synthesis</keyword>
<keyword id="KW-0138">CF(0)</keyword>
<keyword id="KW-0194">Cyanelle</keyword>
<keyword id="KW-0375">Hydrogen ion transport</keyword>
<keyword id="KW-0406">Ion transport</keyword>
<keyword id="KW-0472">Membrane</keyword>
<keyword id="KW-0934">Plastid</keyword>
<keyword id="KW-0793">Thylakoid</keyword>
<keyword id="KW-0812">Transmembrane</keyword>
<keyword id="KW-1133">Transmembrane helix</keyword>
<keyword id="KW-0813">Transport</keyword>
<protein>
    <recommendedName>
        <fullName evidence="2">ATP synthase subunit b, cyanelle</fullName>
    </recommendedName>
    <alternativeName>
        <fullName evidence="2">ATP synthase F(0) sector subunit b</fullName>
    </alternativeName>
    <alternativeName>
        <fullName evidence="2">ATPase subunit I</fullName>
    </alternativeName>
</protein>
<proteinExistence type="inferred from homology"/>
<organism>
    <name type="scientific">Cyanophora paradoxa</name>
    <dbReference type="NCBI Taxonomy" id="2762"/>
    <lineage>
        <taxon>Eukaryota</taxon>
        <taxon>Glaucocystophyceae</taxon>
        <taxon>Cyanophoraceae</taxon>
        <taxon>Cyanophora</taxon>
    </lineage>
</organism>
<accession>P48084</accession>
<gene>
    <name evidence="2" type="primary">atpF</name>
</gene>
<feature type="chain" id="PRO_0000082399" description="ATP synthase subunit b, cyanelle">
    <location>
        <begin position="1"/>
        <end position="185"/>
    </location>
</feature>
<feature type="transmembrane region" description="Helical" evidence="2">
    <location>
        <begin position="36"/>
        <end position="58"/>
    </location>
</feature>
<reference key="1">
    <citation type="journal article" date="1995" name="Plant Mol. Biol. Rep.">
        <title>Nucleotide sequence of the cyanelle DNA from Cyanophora paradoxa.</title>
        <authorList>
            <person name="Stirewalt V.L."/>
            <person name="Michalowski C.B."/>
            <person name="Loeffelhardt W."/>
            <person name="Bohnert H.J."/>
            <person name="Bryant D.A."/>
        </authorList>
    </citation>
    <scope>NUCLEOTIDE SEQUENCE [LARGE SCALE GENOMIC DNA]</scope>
    <source>
        <strain>UTEX LB 555 / Pringsheim</strain>
    </source>
</reference>
<reference key="2">
    <citation type="book" date="1997" name="Eukaryotism and symbiosis">
        <title>The complete sequence of the cyanelle genome of Cyanophora paradoxa: the genetic complexity of a primitive plastid.</title>
        <editorList>
            <person name="Schenk H.E.A."/>
            <person name="Herrmann R."/>
            <person name="Jeon K.W."/>
            <person name="Mueller N.E."/>
            <person name="Schwemmler W."/>
        </editorList>
        <authorList>
            <person name="Loeffelhardt W."/>
            <person name="Stirewalt V.L."/>
            <person name="Michalowski C.B."/>
            <person name="Annarella M."/>
            <person name="Farley J.Y."/>
            <person name="Schluchter W.M."/>
            <person name="Chung S."/>
            <person name="Newmann-Spallart C."/>
            <person name="Steiner J.M."/>
            <person name="Jakowitsch J."/>
            <person name="Bohnert H.J."/>
            <person name="Bryant D.A."/>
        </authorList>
    </citation>
    <scope>NUCLEOTIDE SEQUENCE [LARGE SCALE GENOMIC DNA]</scope>
    <source>
        <strain>UTEX LB 555 / Pringsheim</strain>
    </source>
</reference>
<dbReference type="EMBL" id="U30821">
    <property type="protein sequence ID" value="AAA81255.1"/>
    <property type="molecule type" value="Genomic_DNA"/>
</dbReference>
<dbReference type="PIR" id="T06912">
    <property type="entry name" value="T06912"/>
</dbReference>
<dbReference type="RefSeq" id="NP_043224.1">
    <property type="nucleotide sequence ID" value="NC_001675.1"/>
</dbReference>
<dbReference type="SMR" id="P48084"/>
<dbReference type="GeneID" id="801643"/>
<dbReference type="GO" id="GO:0033115">
    <property type="term" value="C:cyanelle thylakoid membrane"/>
    <property type="evidence" value="ECO:0007669"/>
    <property type="project" value="UniProtKB-SubCell"/>
</dbReference>
<dbReference type="GO" id="GO:0045259">
    <property type="term" value="C:proton-transporting ATP synthase complex"/>
    <property type="evidence" value="ECO:0007669"/>
    <property type="project" value="UniProtKB-KW"/>
</dbReference>
<dbReference type="GO" id="GO:0015078">
    <property type="term" value="F:proton transmembrane transporter activity"/>
    <property type="evidence" value="ECO:0007669"/>
    <property type="project" value="InterPro"/>
</dbReference>
<dbReference type="GO" id="GO:0015986">
    <property type="term" value="P:proton motive force-driven ATP synthesis"/>
    <property type="evidence" value="ECO:0007669"/>
    <property type="project" value="InterPro"/>
</dbReference>
<dbReference type="CDD" id="cd06503">
    <property type="entry name" value="ATP-synt_Fo_b"/>
    <property type="match status" value="1"/>
</dbReference>
<dbReference type="HAMAP" id="MF_01398">
    <property type="entry name" value="ATP_synth_b_bprime"/>
    <property type="match status" value="1"/>
</dbReference>
<dbReference type="InterPro" id="IPR027267">
    <property type="entry name" value="AH/BAR_dom_sf"/>
</dbReference>
<dbReference type="InterPro" id="IPR002146">
    <property type="entry name" value="ATP_synth_b/b'su_bac/chlpt"/>
</dbReference>
<dbReference type="NCBIfam" id="NF005606">
    <property type="entry name" value="PRK07352.1"/>
    <property type="match status" value="1"/>
</dbReference>
<dbReference type="PANTHER" id="PTHR34264">
    <property type="entry name" value="ATP SYNTHASE SUBUNIT B, CHLOROPLASTIC"/>
    <property type="match status" value="1"/>
</dbReference>
<dbReference type="PANTHER" id="PTHR34264:SF3">
    <property type="entry name" value="ATP SYNTHASE SUBUNIT B, CHLOROPLASTIC"/>
    <property type="match status" value="1"/>
</dbReference>
<dbReference type="Pfam" id="PF00430">
    <property type="entry name" value="ATP-synt_B"/>
    <property type="match status" value="1"/>
</dbReference>
<dbReference type="SUPFAM" id="SSF103657">
    <property type="entry name" value="BAR/IMD domain-like"/>
    <property type="match status" value="1"/>
</dbReference>
<comment type="function">
    <text evidence="2">F(1)F(0) ATP synthase produces ATP from ADP in the presence of a proton or sodium gradient. F-type ATPases consist of two structural domains, F(1) containing the extramembraneous catalytic core and F(0) containing the membrane proton channel, linked together by a central stalk and a peripheral stalk. During catalysis, ATP synthesis in the catalytic domain of F(1) is coupled via a rotary mechanism of the central stalk subunits to proton translocation.</text>
</comment>
<comment type="function">
    <text evidence="2">Component of the F(0) channel, it forms part of the peripheral stalk, linking F(1) to F(0).</text>
</comment>
<comment type="subunit">
    <text evidence="2">F-type ATPases have 2 components, F(1) - the catalytic core - and F(0) - the membrane proton channel. F(1) has five subunits: alpha(3), beta(3), gamma(1), delta(1), epsilon(1). F(0) has four main subunits: a(1), b(1), b'(1) and c(10-14). The alpha and beta chains form an alternating ring which encloses part of the gamma chain. F(1) is attached to F(0) by a central stalk formed by the gamma and epsilon chains, while a peripheral stalk is formed by the delta, b and b' chains.</text>
</comment>
<comment type="subcellular location">
    <subcellularLocation>
        <location evidence="1">Plastid</location>
        <location evidence="1">Cyanelle thylakoid membrane</location>
        <topology evidence="2">Single-pass membrane protein</topology>
    </subcellularLocation>
</comment>
<comment type="similarity">
    <text evidence="2">Belongs to the ATPase B chain family.</text>
</comment>
<name>ATPF_CYAPA</name>
<sequence>MNLINSTKIFSSLMIASVENNTAIFSLNTDILETNLINLLVIFFLLIYQGRPFFTALLEERRKTVLDKIKKSENSYNEALEKLKEAKSKLAQAELAAKQIYEEAEAVAESIKKTGLAQLEKDIKRIEETTQASINTQQLSVITYLRQQVALLALRRVVSQLKNYLKPELHSQFIDRKILQLRKQK</sequence>